<accession>A1VZ10</accession>
<reference key="1">
    <citation type="submission" date="2006-12" db="EMBL/GenBank/DDBJ databases">
        <authorList>
            <person name="Fouts D.E."/>
            <person name="Nelson K.E."/>
            <person name="Sebastian Y."/>
        </authorList>
    </citation>
    <scope>NUCLEOTIDE SEQUENCE [LARGE SCALE GENOMIC DNA]</scope>
    <source>
        <strain>81-176</strain>
    </source>
</reference>
<protein>
    <recommendedName>
        <fullName evidence="1">Probable GTP-binding protein EngB</fullName>
    </recommendedName>
</protein>
<comment type="function">
    <text evidence="1">Necessary for normal cell division and for the maintenance of normal septation.</text>
</comment>
<comment type="cofactor">
    <cofactor evidence="1">
        <name>Mg(2+)</name>
        <dbReference type="ChEBI" id="CHEBI:18420"/>
    </cofactor>
</comment>
<comment type="similarity">
    <text evidence="1">Belongs to the TRAFAC class TrmE-Era-EngA-EngB-Septin-like GTPase superfamily. EngB GTPase family.</text>
</comment>
<dbReference type="EMBL" id="CP000538">
    <property type="protein sequence ID" value="EAQ73396.1"/>
    <property type="molecule type" value="Genomic_DNA"/>
</dbReference>
<dbReference type="SMR" id="A1VZ10"/>
<dbReference type="KEGG" id="cjj:CJJ81176_0678"/>
<dbReference type="eggNOG" id="COG0218">
    <property type="taxonomic scope" value="Bacteria"/>
</dbReference>
<dbReference type="HOGENOM" id="CLU_033732_3_2_7"/>
<dbReference type="Proteomes" id="UP000000646">
    <property type="component" value="Chromosome"/>
</dbReference>
<dbReference type="GO" id="GO:0005829">
    <property type="term" value="C:cytosol"/>
    <property type="evidence" value="ECO:0007669"/>
    <property type="project" value="TreeGrafter"/>
</dbReference>
<dbReference type="GO" id="GO:0005525">
    <property type="term" value="F:GTP binding"/>
    <property type="evidence" value="ECO:0007669"/>
    <property type="project" value="UniProtKB-UniRule"/>
</dbReference>
<dbReference type="GO" id="GO:0046872">
    <property type="term" value="F:metal ion binding"/>
    <property type="evidence" value="ECO:0007669"/>
    <property type="project" value="UniProtKB-KW"/>
</dbReference>
<dbReference type="GO" id="GO:0000917">
    <property type="term" value="P:division septum assembly"/>
    <property type="evidence" value="ECO:0007669"/>
    <property type="project" value="UniProtKB-KW"/>
</dbReference>
<dbReference type="CDD" id="cd01876">
    <property type="entry name" value="YihA_EngB"/>
    <property type="match status" value="1"/>
</dbReference>
<dbReference type="Gene3D" id="3.40.50.300">
    <property type="entry name" value="P-loop containing nucleotide triphosphate hydrolases"/>
    <property type="match status" value="1"/>
</dbReference>
<dbReference type="HAMAP" id="MF_00321">
    <property type="entry name" value="GTPase_EngB"/>
    <property type="match status" value="1"/>
</dbReference>
<dbReference type="InterPro" id="IPR030393">
    <property type="entry name" value="G_ENGB_dom"/>
</dbReference>
<dbReference type="InterPro" id="IPR006073">
    <property type="entry name" value="GTP-bd"/>
</dbReference>
<dbReference type="InterPro" id="IPR019987">
    <property type="entry name" value="GTP-bd_ribosome_bio_YsxC"/>
</dbReference>
<dbReference type="InterPro" id="IPR027417">
    <property type="entry name" value="P-loop_NTPase"/>
</dbReference>
<dbReference type="InterPro" id="IPR005225">
    <property type="entry name" value="Small_GTP-bd"/>
</dbReference>
<dbReference type="NCBIfam" id="TIGR03598">
    <property type="entry name" value="GTPase_YsxC"/>
    <property type="match status" value="1"/>
</dbReference>
<dbReference type="NCBIfam" id="TIGR00231">
    <property type="entry name" value="small_GTP"/>
    <property type="match status" value="1"/>
</dbReference>
<dbReference type="PANTHER" id="PTHR11649:SF13">
    <property type="entry name" value="ENGB-TYPE G DOMAIN-CONTAINING PROTEIN"/>
    <property type="match status" value="1"/>
</dbReference>
<dbReference type="PANTHER" id="PTHR11649">
    <property type="entry name" value="MSS1/TRME-RELATED GTP-BINDING PROTEIN"/>
    <property type="match status" value="1"/>
</dbReference>
<dbReference type="Pfam" id="PF01926">
    <property type="entry name" value="MMR_HSR1"/>
    <property type="match status" value="1"/>
</dbReference>
<dbReference type="SUPFAM" id="SSF52540">
    <property type="entry name" value="P-loop containing nucleoside triphosphate hydrolases"/>
    <property type="match status" value="1"/>
</dbReference>
<dbReference type="PROSITE" id="PS51706">
    <property type="entry name" value="G_ENGB"/>
    <property type="match status" value="1"/>
</dbReference>
<keyword id="KW-0131">Cell cycle</keyword>
<keyword id="KW-0132">Cell division</keyword>
<keyword id="KW-0342">GTP-binding</keyword>
<keyword id="KW-0460">Magnesium</keyword>
<keyword id="KW-0479">Metal-binding</keyword>
<keyword id="KW-0547">Nucleotide-binding</keyword>
<keyword id="KW-0717">Septation</keyword>
<sequence length="198" mass="22705">MIIGAKFITSLVKFDENLSSNFSEVAFLGRSNVGKSSLINSLCKQKNLAKSSATPGKTQLINFFEVTCKRNEEKFNINFIDLPGFGYAKVSKNLKEIWNQNLDEFLKLRTSIKLFIHLIDSRHTHLEIDVNLNDYLKRFLRPDQKILKVFTKCDKLNQSEKAKLKNEFKDSILVSNLNKFGLDSLEDIIINQTLGLDK</sequence>
<organism>
    <name type="scientific">Campylobacter jejuni subsp. jejuni serotype O:23/36 (strain 81-176)</name>
    <dbReference type="NCBI Taxonomy" id="354242"/>
    <lineage>
        <taxon>Bacteria</taxon>
        <taxon>Pseudomonadati</taxon>
        <taxon>Campylobacterota</taxon>
        <taxon>Epsilonproteobacteria</taxon>
        <taxon>Campylobacterales</taxon>
        <taxon>Campylobacteraceae</taxon>
        <taxon>Campylobacter</taxon>
    </lineage>
</organism>
<name>ENGB_CAMJJ</name>
<gene>
    <name evidence="1" type="primary">engB</name>
    <name type="ordered locus">CJJ81176_0678</name>
</gene>
<feature type="chain" id="PRO_1000005807" description="Probable GTP-binding protein EngB">
    <location>
        <begin position="1"/>
        <end position="198"/>
    </location>
</feature>
<feature type="domain" description="EngB-type G" evidence="1">
    <location>
        <begin position="21"/>
        <end position="195"/>
    </location>
</feature>
<feature type="binding site" evidence="1">
    <location>
        <begin position="29"/>
        <end position="36"/>
    </location>
    <ligand>
        <name>GTP</name>
        <dbReference type="ChEBI" id="CHEBI:37565"/>
    </ligand>
</feature>
<feature type="binding site" evidence="1">
    <location>
        <position position="36"/>
    </location>
    <ligand>
        <name>Mg(2+)</name>
        <dbReference type="ChEBI" id="CHEBI:18420"/>
    </ligand>
</feature>
<feature type="binding site" evidence="1">
    <location>
        <begin position="56"/>
        <end position="60"/>
    </location>
    <ligand>
        <name>GTP</name>
        <dbReference type="ChEBI" id="CHEBI:37565"/>
    </ligand>
</feature>
<feature type="binding site" evidence="1">
    <location>
        <position position="58"/>
    </location>
    <ligand>
        <name>Mg(2+)</name>
        <dbReference type="ChEBI" id="CHEBI:18420"/>
    </ligand>
</feature>
<feature type="binding site" evidence="1">
    <location>
        <begin position="81"/>
        <end position="84"/>
    </location>
    <ligand>
        <name>GTP</name>
        <dbReference type="ChEBI" id="CHEBI:37565"/>
    </ligand>
</feature>
<feature type="binding site" evidence="1">
    <location>
        <begin position="151"/>
        <end position="154"/>
    </location>
    <ligand>
        <name>GTP</name>
        <dbReference type="ChEBI" id="CHEBI:37565"/>
    </ligand>
</feature>
<feature type="binding site" evidence="1">
    <location>
        <begin position="174"/>
        <end position="176"/>
    </location>
    <ligand>
        <name>GTP</name>
        <dbReference type="ChEBI" id="CHEBI:37565"/>
    </ligand>
</feature>
<evidence type="ECO:0000255" key="1">
    <source>
        <dbReference type="HAMAP-Rule" id="MF_00321"/>
    </source>
</evidence>
<proteinExistence type="inferred from homology"/>